<keyword id="KW-0963">Cytoplasm</keyword>
<keyword id="KW-0227">DNA damage</keyword>
<keyword id="KW-0233">DNA recombination</keyword>
<keyword id="KW-0234">DNA repair</keyword>
<keyword id="KW-0238">DNA-binding</keyword>
<name>RUVA_STAAS</name>
<sequence length="200" mass="22282">MYAYVKGKLTHLYPTHVVVETAGVGYEIQTPNSYRFQKHLDHEVLIRTSLIVREDAQLLYGFSSEEEKDMFLSLIKVTGIGPKSALAILATSTPNEVKRAIENENDTYLTKFPGIGKKTARQIVLDLKGKVKITEEDSDSLLQVDATSTVQDQFVQEAMLALEALGYSKRELAKVEKTLNKNKYDSVDEAVKAGLQLVVS</sequence>
<protein>
    <recommendedName>
        <fullName evidence="1">Holliday junction branch migration complex subunit RuvA</fullName>
    </recommendedName>
</protein>
<organism>
    <name type="scientific">Staphylococcus aureus (strain MSSA476)</name>
    <dbReference type="NCBI Taxonomy" id="282459"/>
    <lineage>
        <taxon>Bacteria</taxon>
        <taxon>Bacillati</taxon>
        <taxon>Bacillota</taxon>
        <taxon>Bacilli</taxon>
        <taxon>Bacillales</taxon>
        <taxon>Staphylococcaceae</taxon>
        <taxon>Staphylococcus</taxon>
    </lineage>
</organism>
<evidence type="ECO:0000255" key="1">
    <source>
        <dbReference type="HAMAP-Rule" id="MF_00031"/>
    </source>
</evidence>
<comment type="function">
    <text evidence="1">The RuvA-RuvB-RuvC complex processes Holliday junction (HJ) DNA during genetic recombination and DNA repair, while the RuvA-RuvB complex plays an important role in the rescue of blocked DNA replication forks via replication fork reversal (RFR). RuvA specifically binds to HJ cruciform DNA, conferring on it an open structure. The RuvB hexamer acts as an ATP-dependent pump, pulling dsDNA into and through the RuvAB complex. HJ branch migration allows RuvC to scan DNA until it finds its consensus sequence, where it cleaves and resolves the cruciform DNA.</text>
</comment>
<comment type="subunit">
    <text evidence="1">Homotetramer. Forms an RuvA(8)-RuvB(12)-Holliday junction (HJ) complex. HJ DNA is sandwiched between 2 RuvA tetramers; dsDNA enters through RuvA and exits via RuvB. An RuvB hexamer assembles on each DNA strand where it exits the tetramer. Each RuvB hexamer is contacted by two RuvA subunits (via domain III) on 2 adjacent RuvB subunits; this complex drives branch migration. In the full resolvosome a probable DNA-RuvA(4)-RuvB(12)-RuvC(2) complex forms which resolves the HJ.</text>
</comment>
<comment type="subcellular location">
    <subcellularLocation>
        <location evidence="1">Cytoplasm</location>
    </subcellularLocation>
</comment>
<comment type="domain">
    <text evidence="1">Has three domains with a flexible linker between the domains II and III and assumes an 'L' shape. Domain III is highly mobile and contacts RuvB.</text>
</comment>
<comment type="similarity">
    <text evidence="1">Belongs to the RuvA family.</text>
</comment>
<reference key="1">
    <citation type="journal article" date="2004" name="Proc. Natl. Acad. Sci. U.S.A.">
        <title>Complete genomes of two clinical Staphylococcus aureus strains: evidence for the rapid evolution of virulence and drug resistance.</title>
        <authorList>
            <person name="Holden M.T.G."/>
            <person name="Feil E.J."/>
            <person name="Lindsay J.A."/>
            <person name="Peacock S.J."/>
            <person name="Day N.P.J."/>
            <person name="Enright M.C."/>
            <person name="Foster T.J."/>
            <person name="Moore C.E."/>
            <person name="Hurst L."/>
            <person name="Atkin R."/>
            <person name="Barron A."/>
            <person name="Bason N."/>
            <person name="Bentley S.D."/>
            <person name="Chillingworth C."/>
            <person name="Chillingworth T."/>
            <person name="Churcher C."/>
            <person name="Clark L."/>
            <person name="Corton C."/>
            <person name="Cronin A."/>
            <person name="Doggett J."/>
            <person name="Dowd L."/>
            <person name="Feltwell T."/>
            <person name="Hance Z."/>
            <person name="Harris B."/>
            <person name="Hauser H."/>
            <person name="Holroyd S."/>
            <person name="Jagels K."/>
            <person name="James K.D."/>
            <person name="Lennard N."/>
            <person name="Line A."/>
            <person name="Mayes R."/>
            <person name="Moule S."/>
            <person name="Mungall K."/>
            <person name="Ormond D."/>
            <person name="Quail M.A."/>
            <person name="Rabbinowitsch E."/>
            <person name="Rutherford K.M."/>
            <person name="Sanders M."/>
            <person name="Sharp S."/>
            <person name="Simmonds M."/>
            <person name="Stevens K."/>
            <person name="Whitehead S."/>
            <person name="Barrell B.G."/>
            <person name="Spratt B.G."/>
            <person name="Parkhill J."/>
        </authorList>
    </citation>
    <scope>NUCLEOTIDE SEQUENCE [LARGE SCALE GENOMIC DNA]</scope>
    <source>
        <strain>MSSA476</strain>
    </source>
</reference>
<gene>
    <name evidence="1" type="primary">ruvA</name>
    <name type="ordered locus">SAS1578</name>
</gene>
<proteinExistence type="inferred from homology"/>
<feature type="chain" id="PRO_0000094682" description="Holliday junction branch migration complex subunit RuvA">
    <location>
        <begin position="1"/>
        <end position="200"/>
    </location>
</feature>
<feature type="region of interest" description="Domain I" evidence="1">
    <location>
        <begin position="1"/>
        <end position="63"/>
    </location>
</feature>
<feature type="region of interest" description="Domain II" evidence="1">
    <location>
        <begin position="64"/>
        <end position="142"/>
    </location>
</feature>
<feature type="region of interest" description="Flexible linker" evidence="1">
    <location>
        <begin position="143"/>
        <end position="149"/>
    </location>
</feature>
<feature type="region of interest" description="Domain III" evidence="1">
    <location>
        <begin position="150"/>
        <end position="200"/>
    </location>
</feature>
<dbReference type="EMBL" id="BX571857">
    <property type="protein sequence ID" value="CAG43379.1"/>
    <property type="molecule type" value="Genomic_DNA"/>
</dbReference>
<dbReference type="RefSeq" id="WP_000271550.1">
    <property type="nucleotide sequence ID" value="NC_002953.3"/>
</dbReference>
<dbReference type="SMR" id="Q6G8S7"/>
<dbReference type="KEGG" id="sas:SAS1578"/>
<dbReference type="HOGENOM" id="CLU_087936_1_0_9"/>
<dbReference type="GO" id="GO:0005737">
    <property type="term" value="C:cytoplasm"/>
    <property type="evidence" value="ECO:0007669"/>
    <property type="project" value="UniProtKB-SubCell"/>
</dbReference>
<dbReference type="GO" id="GO:0009379">
    <property type="term" value="C:Holliday junction helicase complex"/>
    <property type="evidence" value="ECO:0007669"/>
    <property type="project" value="InterPro"/>
</dbReference>
<dbReference type="GO" id="GO:0048476">
    <property type="term" value="C:Holliday junction resolvase complex"/>
    <property type="evidence" value="ECO:0007669"/>
    <property type="project" value="UniProtKB-UniRule"/>
</dbReference>
<dbReference type="GO" id="GO:0005524">
    <property type="term" value="F:ATP binding"/>
    <property type="evidence" value="ECO:0007669"/>
    <property type="project" value="InterPro"/>
</dbReference>
<dbReference type="GO" id="GO:0000400">
    <property type="term" value="F:four-way junction DNA binding"/>
    <property type="evidence" value="ECO:0007669"/>
    <property type="project" value="UniProtKB-UniRule"/>
</dbReference>
<dbReference type="GO" id="GO:0009378">
    <property type="term" value="F:four-way junction helicase activity"/>
    <property type="evidence" value="ECO:0007669"/>
    <property type="project" value="InterPro"/>
</dbReference>
<dbReference type="GO" id="GO:0006310">
    <property type="term" value="P:DNA recombination"/>
    <property type="evidence" value="ECO:0007669"/>
    <property type="project" value="UniProtKB-UniRule"/>
</dbReference>
<dbReference type="GO" id="GO:0006281">
    <property type="term" value="P:DNA repair"/>
    <property type="evidence" value="ECO:0007669"/>
    <property type="project" value="UniProtKB-UniRule"/>
</dbReference>
<dbReference type="CDD" id="cd14332">
    <property type="entry name" value="UBA_RuvA_C"/>
    <property type="match status" value="1"/>
</dbReference>
<dbReference type="Gene3D" id="1.10.150.20">
    <property type="entry name" value="5' to 3' exonuclease, C-terminal subdomain"/>
    <property type="match status" value="1"/>
</dbReference>
<dbReference type="Gene3D" id="1.10.8.10">
    <property type="entry name" value="DNA helicase RuvA subunit, C-terminal domain"/>
    <property type="match status" value="1"/>
</dbReference>
<dbReference type="Gene3D" id="2.40.50.140">
    <property type="entry name" value="Nucleic acid-binding proteins"/>
    <property type="match status" value="1"/>
</dbReference>
<dbReference type="HAMAP" id="MF_00031">
    <property type="entry name" value="DNA_HJ_migration_RuvA"/>
    <property type="match status" value="1"/>
</dbReference>
<dbReference type="InterPro" id="IPR013849">
    <property type="entry name" value="DNA_helicase_Holl-junc_RuvA_I"/>
</dbReference>
<dbReference type="InterPro" id="IPR003583">
    <property type="entry name" value="Hlx-hairpin-Hlx_DNA-bd_motif"/>
</dbReference>
<dbReference type="InterPro" id="IPR012340">
    <property type="entry name" value="NA-bd_OB-fold"/>
</dbReference>
<dbReference type="InterPro" id="IPR000085">
    <property type="entry name" value="RuvA"/>
</dbReference>
<dbReference type="InterPro" id="IPR010994">
    <property type="entry name" value="RuvA_2-like"/>
</dbReference>
<dbReference type="InterPro" id="IPR011114">
    <property type="entry name" value="RuvA_C"/>
</dbReference>
<dbReference type="InterPro" id="IPR036267">
    <property type="entry name" value="RuvA_C_sf"/>
</dbReference>
<dbReference type="NCBIfam" id="TIGR00084">
    <property type="entry name" value="ruvA"/>
    <property type="match status" value="1"/>
</dbReference>
<dbReference type="Pfam" id="PF14520">
    <property type="entry name" value="HHH_5"/>
    <property type="match status" value="1"/>
</dbReference>
<dbReference type="Pfam" id="PF07499">
    <property type="entry name" value="RuvA_C"/>
    <property type="match status" value="1"/>
</dbReference>
<dbReference type="Pfam" id="PF01330">
    <property type="entry name" value="RuvA_N"/>
    <property type="match status" value="1"/>
</dbReference>
<dbReference type="SMART" id="SM00278">
    <property type="entry name" value="HhH1"/>
    <property type="match status" value="2"/>
</dbReference>
<dbReference type="SUPFAM" id="SSF46929">
    <property type="entry name" value="DNA helicase RuvA subunit, C-terminal domain"/>
    <property type="match status" value="1"/>
</dbReference>
<dbReference type="SUPFAM" id="SSF50249">
    <property type="entry name" value="Nucleic acid-binding proteins"/>
    <property type="match status" value="1"/>
</dbReference>
<dbReference type="SUPFAM" id="SSF47781">
    <property type="entry name" value="RuvA domain 2-like"/>
    <property type="match status" value="1"/>
</dbReference>
<accession>Q6G8S7</accession>